<organism>
    <name type="scientific">Xenopus laevis</name>
    <name type="common">African clawed frog</name>
    <dbReference type="NCBI Taxonomy" id="8355"/>
    <lineage>
        <taxon>Eukaryota</taxon>
        <taxon>Metazoa</taxon>
        <taxon>Chordata</taxon>
        <taxon>Craniata</taxon>
        <taxon>Vertebrata</taxon>
        <taxon>Euteleostomi</taxon>
        <taxon>Amphibia</taxon>
        <taxon>Batrachia</taxon>
        <taxon>Anura</taxon>
        <taxon>Pipoidea</taxon>
        <taxon>Pipidae</taxon>
        <taxon>Xenopodinae</taxon>
        <taxon>Xenopus</taxon>
        <taxon>Xenopus</taxon>
    </lineage>
</organism>
<dbReference type="EMBL" id="BC043773">
    <property type="protein sequence ID" value="AAH43773.1"/>
    <property type="molecule type" value="mRNA"/>
</dbReference>
<dbReference type="RefSeq" id="NP_001082434.1">
    <property type="nucleotide sequence ID" value="NM_001088965.1"/>
</dbReference>
<dbReference type="SMR" id="Q7ZYI3"/>
<dbReference type="DNASU" id="398466"/>
<dbReference type="GeneID" id="398466"/>
<dbReference type="KEGG" id="xla:398466"/>
<dbReference type="AGR" id="Xenbase:XB-GENE-6256316"/>
<dbReference type="CTD" id="398466"/>
<dbReference type="Xenbase" id="XB-GENE-6256316">
    <property type="gene designation" value="mdm4.S"/>
</dbReference>
<dbReference type="OrthoDB" id="24526at2759"/>
<dbReference type="Proteomes" id="UP000186698">
    <property type="component" value="Chromosome 2S"/>
</dbReference>
<dbReference type="Bgee" id="398466">
    <property type="expression patterns" value="Expressed in spleen and 19 other cell types or tissues"/>
</dbReference>
<dbReference type="GO" id="GO:0005634">
    <property type="term" value="C:nucleus"/>
    <property type="evidence" value="ECO:0007669"/>
    <property type="project" value="UniProtKB-SubCell"/>
</dbReference>
<dbReference type="GO" id="GO:0002039">
    <property type="term" value="F:p53 binding"/>
    <property type="evidence" value="ECO:0007669"/>
    <property type="project" value="TreeGrafter"/>
</dbReference>
<dbReference type="GO" id="GO:0061630">
    <property type="term" value="F:ubiquitin protein ligase activity"/>
    <property type="evidence" value="ECO:0000318"/>
    <property type="project" value="GO_Central"/>
</dbReference>
<dbReference type="GO" id="GO:0008270">
    <property type="term" value="F:zinc ion binding"/>
    <property type="evidence" value="ECO:0007669"/>
    <property type="project" value="UniProtKB-KW"/>
</dbReference>
<dbReference type="GO" id="GO:0043066">
    <property type="term" value="P:negative regulation of apoptotic process"/>
    <property type="evidence" value="ECO:0000318"/>
    <property type="project" value="GO_Central"/>
</dbReference>
<dbReference type="GO" id="GO:0045931">
    <property type="term" value="P:positive regulation of mitotic cell cycle"/>
    <property type="evidence" value="ECO:0000318"/>
    <property type="project" value="GO_Central"/>
</dbReference>
<dbReference type="GO" id="GO:0016567">
    <property type="term" value="P:protein ubiquitination"/>
    <property type="evidence" value="ECO:0007669"/>
    <property type="project" value="TreeGrafter"/>
</dbReference>
<dbReference type="GO" id="GO:0010468">
    <property type="term" value="P:regulation of gene expression"/>
    <property type="evidence" value="ECO:0007669"/>
    <property type="project" value="TreeGrafter"/>
</dbReference>
<dbReference type="GO" id="GO:0006511">
    <property type="term" value="P:ubiquitin-dependent protein catabolic process"/>
    <property type="evidence" value="ECO:0000318"/>
    <property type="project" value="GO_Central"/>
</dbReference>
<dbReference type="CDD" id="cd17673">
    <property type="entry name" value="MDM4"/>
    <property type="match status" value="1"/>
</dbReference>
<dbReference type="CDD" id="cd16784">
    <property type="entry name" value="mRING-HC-C2H2C4_MDM4"/>
    <property type="match status" value="1"/>
</dbReference>
<dbReference type="Gene3D" id="1.10.245.10">
    <property type="entry name" value="SWIB/MDM2 domain"/>
    <property type="match status" value="1"/>
</dbReference>
<dbReference type="Gene3D" id="3.30.40.10">
    <property type="entry name" value="Zinc/RING finger domain, C3HC4 (zinc finger)"/>
    <property type="match status" value="1"/>
</dbReference>
<dbReference type="Gene3D" id="2.30.30.380">
    <property type="entry name" value="Zn-finger domain of Sec23/24"/>
    <property type="match status" value="1"/>
</dbReference>
<dbReference type="InterPro" id="IPR015458">
    <property type="entry name" value="MDM4"/>
</dbReference>
<dbReference type="InterPro" id="IPR016495">
    <property type="entry name" value="p53_neg-reg_MDM_2/4"/>
</dbReference>
<dbReference type="InterPro" id="IPR036885">
    <property type="entry name" value="SWIB_MDM2_dom_sf"/>
</dbReference>
<dbReference type="InterPro" id="IPR003121">
    <property type="entry name" value="SWIB_MDM2_domain"/>
</dbReference>
<dbReference type="InterPro" id="IPR001876">
    <property type="entry name" value="Znf_RanBP2"/>
</dbReference>
<dbReference type="InterPro" id="IPR036443">
    <property type="entry name" value="Znf_RanBP2_sf"/>
</dbReference>
<dbReference type="InterPro" id="IPR013083">
    <property type="entry name" value="Znf_RING/FYVE/PHD"/>
</dbReference>
<dbReference type="PANTHER" id="PTHR46858">
    <property type="entry name" value="OS05G0521000 PROTEIN"/>
    <property type="match status" value="1"/>
</dbReference>
<dbReference type="PANTHER" id="PTHR46858:SF12">
    <property type="entry name" value="PROTEIN MDM4"/>
    <property type="match status" value="1"/>
</dbReference>
<dbReference type="Pfam" id="PF13920">
    <property type="entry name" value="zf-C3HC4_3"/>
    <property type="match status" value="1"/>
</dbReference>
<dbReference type="PIRSF" id="PIRSF500699">
    <property type="entry name" value="MDM4"/>
    <property type="match status" value="1"/>
</dbReference>
<dbReference type="PIRSF" id="PIRSF006748">
    <property type="entry name" value="p53_MDM_2/4"/>
    <property type="match status" value="1"/>
</dbReference>
<dbReference type="SUPFAM" id="SSF90209">
    <property type="entry name" value="Ran binding protein zinc finger-like"/>
    <property type="match status" value="1"/>
</dbReference>
<dbReference type="SUPFAM" id="SSF47592">
    <property type="entry name" value="SWIB/MDM2 domain"/>
    <property type="match status" value="1"/>
</dbReference>
<dbReference type="PROSITE" id="PS51925">
    <property type="entry name" value="SWIB_MDM2"/>
    <property type="match status" value="1"/>
</dbReference>
<dbReference type="PROSITE" id="PS01358">
    <property type="entry name" value="ZF_RANBP2_1"/>
    <property type="match status" value="1"/>
</dbReference>
<dbReference type="PROSITE" id="PS50199">
    <property type="entry name" value="ZF_RANBP2_2"/>
    <property type="match status" value="1"/>
</dbReference>
<feature type="chain" id="PRO_0000331518" description="Protein Mdm4">
    <location>
        <begin position="1"/>
        <end position="475"/>
    </location>
</feature>
<feature type="domain" description="SWIB/MDM2" evidence="4">
    <location>
        <begin position="26"/>
        <end position="109"/>
    </location>
</feature>
<feature type="zinc finger region" description="RanBP2-type" evidence="3">
    <location>
        <begin position="296"/>
        <end position="325"/>
    </location>
</feature>
<feature type="zinc finger region" description="RING-type; degenerate">
    <location>
        <begin position="422"/>
        <end position="463"/>
    </location>
</feature>
<feature type="short sequence motif" description="Nuclear localization signal" evidence="2">
    <location>
        <begin position="427"/>
        <end position="430"/>
    </location>
</feature>
<protein>
    <recommendedName>
        <fullName>Protein Mdm4</fullName>
    </recommendedName>
    <alternativeName>
        <fullName>Double minute 4 protein</fullName>
    </alternativeName>
    <alternativeName>
        <fullName>Mdm2-like p53-binding protein</fullName>
    </alternativeName>
    <alternativeName>
        <fullName>Mdmx protein</fullName>
    </alternativeName>
    <alternativeName>
        <fullName>p53-binding protein Mdm4</fullName>
    </alternativeName>
</protein>
<proteinExistence type="evidence at transcript level"/>
<keyword id="KW-0479">Metal-binding</keyword>
<keyword id="KW-0539">Nucleus</keyword>
<keyword id="KW-1185">Reference proteome</keyword>
<keyword id="KW-0862">Zinc</keyword>
<keyword id="KW-0863">Zinc-finger</keyword>
<comment type="function">
    <text evidence="1">Inhibits p53- and p73-mediated cell cycle arrest and apoptosis by binding its transcriptional activation domain.</text>
</comment>
<comment type="subunit">
    <text evidence="1">Binds to p53 and p73.</text>
</comment>
<comment type="subcellular location">
    <subcellularLocation>
        <location evidence="1">Nucleus</location>
    </subcellularLocation>
</comment>
<comment type="similarity">
    <text evidence="5">Belongs to the MDM2/MDM4 family.</text>
</comment>
<accession>Q7ZYI3</accession>
<sequence length="475" mass="53405">MSTSTALHLMDEQDPAPTTIQNTEESLVRVQPALLKILQSAGAKGDMFTLKQVMHYLGQYIMVKGLYDKQHQHIVHCGSDELGKLLGITTFSVKDPRPLYDMLKKNLLRISCTDAGHSPSRNKSQASDSLELEKSFASKTEVTDVIKRNDCVSSDMCTSFDNSHLKGNESSDYTKQSLDFIFEEWDEAGLPWWFLGNLRTNYNLQSIGSTDIPSNQDIDTATVSDTTDDMWFLNDSRTDRINMEVKMESSDSLEEEVGECDSKKPAQMIELTLYEDDDDLDDTQSLSEDTDTEVTSEECWQCTKCHKFNSPVKRYCYRCWALRKDWYLDFPRLIHSSSTPTLPGKVSSQMIVDGLDIPDCRRTVSAPMVGVQVPECRSLVPFLEPLDLAANSKAFSESTDTLLTFKAAEASLLSSRPLLEPCQLCQRRQRNGSVVHGRTAHLVTCFSCACNLKKNQKGCPVCEKPIQMVVKIYVA</sequence>
<evidence type="ECO:0000250" key="1"/>
<evidence type="ECO:0000255" key="2"/>
<evidence type="ECO:0000255" key="3">
    <source>
        <dbReference type="PROSITE-ProRule" id="PRU00322"/>
    </source>
</evidence>
<evidence type="ECO:0000255" key="4">
    <source>
        <dbReference type="PROSITE-ProRule" id="PRU01273"/>
    </source>
</evidence>
<evidence type="ECO:0000305" key="5"/>
<reference key="1">
    <citation type="submission" date="2003-01" db="EMBL/GenBank/DDBJ databases">
        <authorList>
            <consortium name="NIH - Xenopus Gene Collection (XGC) project"/>
        </authorList>
    </citation>
    <scope>NUCLEOTIDE SEQUENCE [LARGE SCALE MRNA]</scope>
    <source>
        <tissue>Embryo</tissue>
    </source>
</reference>
<gene>
    <name type="primary">mdm4</name>
    <name type="synonym">mdmx</name>
</gene>
<name>MDM4_XENLA</name>